<evidence type="ECO:0000255" key="1">
    <source>
        <dbReference type="HAMAP-Rule" id="MF_00083"/>
    </source>
</evidence>
<evidence type="ECO:0000256" key="2">
    <source>
        <dbReference type="SAM" id="MobiDB-lite"/>
    </source>
</evidence>
<organism>
    <name type="scientific">Rhizobium etli (strain ATCC 51251 / DSM 11541 / JCM 21823 / NBRC 15573 / CFN 42)</name>
    <dbReference type="NCBI Taxonomy" id="347834"/>
    <lineage>
        <taxon>Bacteria</taxon>
        <taxon>Pseudomonadati</taxon>
        <taxon>Pseudomonadota</taxon>
        <taxon>Alphaproteobacteria</taxon>
        <taxon>Hyphomicrobiales</taxon>
        <taxon>Rhizobiaceae</taxon>
        <taxon>Rhizobium/Agrobacterium group</taxon>
        <taxon>Rhizobium</taxon>
    </lineage>
</organism>
<gene>
    <name evidence="1" type="primary">pth</name>
    <name type="ordered locus">RHE_CH03028</name>
</gene>
<sequence length="240" mass="26122">MLIIAGLGNPGSKYAGNRHNIGFLAVDAIHRRHSFSPWSKKFKAAIAEGELGGEKVLLIKPQTYMNLSGEAVGEAMRFYKLQPADLVAIYDELDLPAGKARLKTGGGHGGHNGIKSLDAHCGKEYRRLRLGIGHPGVKEMVQNHVLGDFAKADNAWLEPLLDTLADNADMLVRNEDSQLMNKIALALGGKADEEKPRKDSEKKPAGQSHIRQARNNNQPKLPATGPMADMLKKMFGNKGE</sequence>
<feature type="chain" id="PRO_0000264087" description="Peptidyl-tRNA hydrolase">
    <location>
        <begin position="1"/>
        <end position="240"/>
    </location>
</feature>
<feature type="region of interest" description="Disordered" evidence="2">
    <location>
        <begin position="190"/>
        <end position="240"/>
    </location>
</feature>
<feature type="compositionally biased region" description="Basic and acidic residues" evidence="2">
    <location>
        <begin position="190"/>
        <end position="204"/>
    </location>
</feature>
<feature type="compositionally biased region" description="Polar residues" evidence="2">
    <location>
        <begin position="209"/>
        <end position="219"/>
    </location>
</feature>
<feature type="active site" description="Proton acceptor" evidence="1">
    <location>
        <position position="19"/>
    </location>
</feature>
<feature type="binding site" evidence="1">
    <location>
        <position position="14"/>
    </location>
    <ligand>
        <name>tRNA</name>
        <dbReference type="ChEBI" id="CHEBI:17843"/>
    </ligand>
</feature>
<feature type="binding site" evidence="1">
    <location>
        <position position="64"/>
    </location>
    <ligand>
        <name>tRNA</name>
        <dbReference type="ChEBI" id="CHEBI:17843"/>
    </ligand>
</feature>
<feature type="binding site" evidence="1">
    <location>
        <position position="66"/>
    </location>
    <ligand>
        <name>tRNA</name>
        <dbReference type="ChEBI" id="CHEBI:17843"/>
    </ligand>
</feature>
<feature type="binding site" evidence="1">
    <location>
        <position position="112"/>
    </location>
    <ligand>
        <name>tRNA</name>
        <dbReference type="ChEBI" id="CHEBI:17843"/>
    </ligand>
</feature>
<feature type="site" description="Discriminates between blocked and unblocked aminoacyl-tRNA" evidence="1">
    <location>
        <position position="9"/>
    </location>
</feature>
<feature type="site" description="Stabilizes the basic form of H active site to accept a proton" evidence="1">
    <location>
        <position position="91"/>
    </location>
</feature>
<protein>
    <recommendedName>
        <fullName evidence="1">Peptidyl-tRNA hydrolase</fullName>
        <shortName evidence="1">Pth</shortName>
        <ecNumber evidence="1">3.1.1.29</ecNumber>
    </recommendedName>
</protein>
<proteinExistence type="inferred from homology"/>
<accession>Q2K5U1</accession>
<reference key="1">
    <citation type="journal article" date="2006" name="Proc. Natl. Acad. Sci. U.S.A.">
        <title>The partitioned Rhizobium etli genome: genetic and metabolic redundancy in seven interacting replicons.</title>
        <authorList>
            <person name="Gonzalez V."/>
            <person name="Santamaria R.I."/>
            <person name="Bustos P."/>
            <person name="Hernandez-Gonzalez I."/>
            <person name="Medrano-Soto A."/>
            <person name="Moreno-Hagelsieb G."/>
            <person name="Janga S.C."/>
            <person name="Ramirez M.A."/>
            <person name="Jimenez-Jacinto V."/>
            <person name="Collado-Vides J."/>
            <person name="Davila G."/>
        </authorList>
    </citation>
    <scope>NUCLEOTIDE SEQUENCE [LARGE SCALE GENOMIC DNA]</scope>
    <source>
        <strain>ATCC 51251 / DSM 11541 / JCM 21823 / NBRC 15573 / CFN 42</strain>
    </source>
</reference>
<comment type="function">
    <text evidence="1">Hydrolyzes ribosome-free peptidyl-tRNAs (with 1 or more amino acids incorporated), which drop off the ribosome during protein synthesis, or as a result of ribosome stalling.</text>
</comment>
<comment type="function">
    <text evidence="1">Catalyzes the release of premature peptidyl moieties from peptidyl-tRNA molecules trapped in stalled 50S ribosomal subunits, and thus maintains levels of free tRNAs and 50S ribosomes.</text>
</comment>
<comment type="catalytic activity">
    <reaction evidence="1">
        <text>an N-acyl-L-alpha-aminoacyl-tRNA + H2O = an N-acyl-L-amino acid + a tRNA + H(+)</text>
        <dbReference type="Rhea" id="RHEA:54448"/>
        <dbReference type="Rhea" id="RHEA-COMP:10123"/>
        <dbReference type="Rhea" id="RHEA-COMP:13883"/>
        <dbReference type="ChEBI" id="CHEBI:15377"/>
        <dbReference type="ChEBI" id="CHEBI:15378"/>
        <dbReference type="ChEBI" id="CHEBI:59874"/>
        <dbReference type="ChEBI" id="CHEBI:78442"/>
        <dbReference type="ChEBI" id="CHEBI:138191"/>
        <dbReference type="EC" id="3.1.1.29"/>
    </reaction>
</comment>
<comment type="subunit">
    <text evidence="1">Monomer.</text>
</comment>
<comment type="subcellular location">
    <subcellularLocation>
        <location evidence="1">Cytoplasm</location>
    </subcellularLocation>
</comment>
<comment type="similarity">
    <text evidence="1">Belongs to the PTH family.</text>
</comment>
<dbReference type="EC" id="3.1.1.29" evidence="1"/>
<dbReference type="EMBL" id="CP000133">
    <property type="protein sequence ID" value="ABC91795.1"/>
    <property type="molecule type" value="Genomic_DNA"/>
</dbReference>
<dbReference type="RefSeq" id="WP_011426268.1">
    <property type="nucleotide sequence ID" value="NC_007761.1"/>
</dbReference>
<dbReference type="SMR" id="Q2K5U1"/>
<dbReference type="KEGG" id="ret:RHE_CH03028"/>
<dbReference type="eggNOG" id="COG0193">
    <property type="taxonomic scope" value="Bacteria"/>
</dbReference>
<dbReference type="HOGENOM" id="CLU_062456_1_1_5"/>
<dbReference type="OrthoDB" id="9800507at2"/>
<dbReference type="Proteomes" id="UP000001936">
    <property type="component" value="Chromosome"/>
</dbReference>
<dbReference type="GO" id="GO:0005737">
    <property type="term" value="C:cytoplasm"/>
    <property type="evidence" value="ECO:0007669"/>
    <property type="project" value="UniProtKB-SubCell"/>
</dbReference>
<dbReference type="GO" id="GO:0004045">
    <property type="term" value="F:peptidyl-tRNA hydrolase activity"/>
    <property type="evidence" value="ECO:0007669"/>
    <property type="project" value="UniProtKB-UniRule"/>
</dbReference>
<dbReference type="GO" id="GO:0000049">
    <property type="term" value="F:tRNA binding"/>
    <property type="evidence" value="ECO:0007669"/>
    <property type="project" value="UniProtKB-UniRule"/>
</dbReference>
<dbReference type="GO" id="GO:0006515">
    <property type="term" value="P:protein quality control for misfolded or incompletely synthesized proteins"/>
    <property type="evidence" value="ECO:0007669"/>
    <property type="project" value="UniProtKB-UniRule"/>
</dbReference>
<dbReference type="GO" id="GO:0072344">
    <property type="term" value="P:rescue of stalled ribosome"/>
    <property type="evidence" value="ECO:0007669"/>
    <property type="project" value="UniProtKB-UniRule"/>
</dbReference>
<dbReference type="CDD" id="cd00462">
    <property type="entry name" value="PTH"/>
    <property type="match status" value="1"/>
</dbReference>
<dbReference type="FunFam" id="3.40.50.1470:FF:000001">
    <property type="entry name" value="Peptidyl-tRNA hydrolase"/>
    <property type="match status" value="1"/>
</dbReference>
<dbReference type="Gene3D" id="3.40.50.1470">
    <property type="entry name" value="Peptidyl-tRNA hydrolase"/>
    <property type="match status" value="1"/>
</dbReference>
<dbReference type="HAMAP" id="MF_00083">
    <property type="entry name" value="Pept_tRNA_hydro_bact"/>
    <property type="match status" value="1"/>
</dbReference>
<dbReference type="InterPro" id="IPR001328">
    <property type="entry name" value="Pept_tRNA_hydro"/>
</dbReference>
<dbReference type="InterPro" id="IPR018171">
    <property type="entry name" value="Pept_tRNA_hydro_CS"/>
</dbReference>
<dbReference type="InterPro" id="IPR036416">
    <property type="entry name" value="Pept_tRNA_hydro_sf"/>
</dbReference>
<dbReference type="NCBIfam" id="TIGR00447">
    <property type="entry name" value="pth"/>
    <property type="match status" value="1"/>
</dbReference>
<dbReference type="PANTHER" id="PTHR17224">
    <property type="entry name" value="PEPTIDYL-TRNA HYDROLASE"/>
    <property type="match status" value="1"/>
</dbReference>
<dbReference type="PANTHER" id="PTHR17224:SF1">
    <property type="entry name" value="PEPTIDYL-TRNA HYDROLASE"/>
    <property type="match status" value="1"/>
</dbReference>
<dbReference type="Pfam" id="PF01195">
    <property type="entry name" value="Pept_tRNA_hydro"/>
    <property type="match status" value="1"/>
</dbReference>
<dbReference type="SUPFAM" id="SSF53178">
    <property type="entry name" value="Peptidyl-tRNA hydrolase-like"/>
    <property type="match status" value="1"/>
</dbReference>
<dbReference type="PROSITE" id="PS01195">
    <property type="entry name" value="PEPT_TRNA_HYDROL_1"/>
    <property type="match status" value="1"/>
</dbReference>
<dbReference type="PROSITE" id="PS01196">
    <property type="entry name" value="PEPT_TRNA_HYDROL_2"/>
    <property type="match status" value="1"/>
</dbReference>
<keyword id="KW-0963">Cytoplasm</keyword>
<keyword id="KW-0378">Hydrolase</keyword>
<keyword id="KW-1185">Reference proteome</keyword>
<keyword id="KW-0694">RNA-binding</keyword>
<keyword id="KW-0820">tRNA-binding</keyword>
<name>PTH_RHIEC</name>